<geneLocation type="chloroplast"/>
<gene>
    <name evidence="1" type="primary">rbcL</name>
</gene>
<protein>
    <recommendedName>
        <fullName evidence="1">Ribulose bisphosphate carboxylase large chain</fullName>
        <shortName evidence="1">RuBisCO large subunit</shortName>
        <ecNumber evidence="1">4.1.1.39</ecNumber>
    </recommendedName>
</protein>
<dbReference type="EC" id="4.1.1.39" evidence="1"/>
<dbReference type="EMBL" id="L14390">
    <property type="protein sequence ID" value="AAA19751.1"/>
    <property type="molecule type" value="Genomic_DNA"/>
</dbReference>
<dbReference type="GO" id="GO:0009507">
    <property type="term" value="C:chloroplast"/>
    <property type="evidence" value="ECO:0007669"/>
    <property type="project" value="UniProtKB-SubCell"/>
</dbReference>
<dbReference type="GO" id="GO:0000287">
    <property type="term" value="F:magnesium ion binding"/>
    <property type="evidence" value="ECO:0007669"/>
    <property type="project" value="InterPro"/>
</dbReference>
<dbReference type="GO" id="GO:0004497">
    <property type="term" value="F:monooxygenase activity"/>
    <property type="evidence" value="ECO:0007669"/>
    <property type="project" value="UniProtKB-KW"/>
</dbReference>
<dbReference type="GO" id="GO:0016984">
    <property type="term" value="F:ribulose-bisphosphate carboxylase activity"/>
    <property type="evidence" value="ECO:0007669"/>
    <property type="project" value="UniProtKB-EC"/>
</dbReference>
<dbReference type="GO" id="GO:0009853">
    <property type="term" value="P:photorespiration"/>
    <property type="evidence" value="ECO:0007669"/>
    <property type="project" value="UniProtKB-KW"/>
</dbReference>
<dbReference type="GO" id="GO:0019253">
    <property type="term" value="P:reductive pentose-phosphate cycle"/>
    <property type="evidence" value="ECO:0007669"/>
    <property type="project" value="UniProtKB-KW"/>
</dbReference>
<dbReference type="CDD" id="cd08212">
    <property type="entry name" value="RuBisCO_large_I"/>
    <property type="match status" value="1"/>
</dbReference>
<dbReference type="FunFam" id="3.20.20.110:FF:000001">
    <property type="entry name" value="Ribulose bisphosphate carboxylase large chain"/>
    <property type="match status" value="1"/>
</dbReference>
<dbReference type="Gene3D" id="3.20.20.110">
    <property type="entry name" value="Ribulose bisphosphate carboxylase, large subunit, C-terminal domain"/>
    <property type="match status" value="1"/>
</dbReference>
<dbReference type="Gene3D" id="3.30.70.150">
    <property type="entry name" value="RuBisCO large subunit, N-terminal domain"/>
    <property type="match status" value="1"/>
</dbReference>
<dbReference type="HAMAP" id="MF_01338">
    <property type="entry name" value="RuBisCO_L_type1"/>
    <property type="match status" value="1"/>
</dbReference>
<dbReference type="InterPro" id="IPR033966">
    <property type="entry name" value="RuBisCO"/>
</dbReference>
<dbReference type="InterPro" id="IPR020878">
    <property type="entry name" value="RuBisCo_large_chain_AS"/>
</dbReference>
<dbReference type="InterPro" id="IPR000685">
    <property type="entry name" value="RuBisCO_lsu_C"/>
</dbReference>
<dbReference type="InterPro" id="IPR036376">
    <property type="entry name" value="RuBisCO_lsu_C_sf"/>
</dbReference>
<dbReference type="InterPro" id="IPR017443">
    <property type="entry name" value="RuBisCO_lsu_fd_N"/>
</dbReference>
<dbReference type="InterPro" id="IPR036422">
    <property type="entry name" value="RuBisCO_lsu_N_sf"/>
</dbReference>
<dbReference type="InterPro" id="IPR020888">
    <property type="entry name" value="RuBisCO_lsuI"/>
</dbReference>
<dbReference type="NCBIfam" id="NF003252">
    <property type="entry name" value="PRK04208.1"/>
    <property type="match status" value="1"/>
</dbReference>
<dbReference type="PANTHER" id="PTHR42704">
    <property type="entry name" value="RIBULOSE BISPHOSPHATE CARBOXYLASE"/>
    <property type="match status" value="1"/>
</dbReference>
<dbReference type="PANTHER" id="PTHR42704:SF16">
    <property type="entry name" value="RIBULOSE BISPHOSPHATE CARBOXYLASE LARGE CHAIN"/>
    <property type="match status" value="1"/>
</dbReference>
<dbReference type="Pfam" id="PF00016">
    <property type="entry name" value="RuBisCO_large"/>
    <property type="match status" value="1"/>
</dbReference>
<dbReference type="Pfam" id="PF02788">
    <property type="entry name" value="RuBisCO_large_N"/>
    <property type="match status" value="1"/>
</dbReference>
<dbReference type="SFLD" id="SFLDS00014">
    <property type="entry name" value="RuBisCO"/>
    <property type="match status" value="1"/>
</dbReference>
<dbReference type="SFLD" id="SFLDG00301">
    <property type="entry name" value="RuBisCO-like_proteins"/>
    <property type="match status" value="1"/>
</dbReference>
<dbReference type="SUPFAM" id="SSF51649">
    <property type="entry name" value="RuBisCo, C-terminal domain"/>
    <property type="match status" value="1"/>
</dbReference>
<dbReference type="SUPFAM" id="SSF54966">
    <property type="entry name" value="RuBisCO, large subunit, small (N-terminal) domain"/>
    <property type="match status" value="1"/>
</dbReference>
<dbReference type="PROSITE" id="PS00157">
    <property type="entry name" value="RUBISCO_LARGE"/>
    <property type="match status" value="1"/>
</dbReference>
<accession>P36480</accession>
<reference key="1">
    <citation type="journal article" date="1993" name="Ann. Mo. Bot. Gard.">
        <title>A parsimony analysis of the Asteridae sensu lato based on rbcL sequences.</title>
        <authorList>
            <person name="Olmstead R.G."/>
            <person name="Bremer B."/>
            <person name="Scott K.M."/>
            <person name="Palmer J.D."/>
        </authorList>
        <dbReference type="AGRICOLA" id="IND93053816"/>
    </citation>
    <scope>NUCLEOTIDE SEQUENCE [GENOMIC DNA]</scope>
</reference>
<name>RBL_ASCEX</name>
<feature type="chain" id="PRO_0000062364" description="Ribulose bisphosphate carboxylase large chain">
    <location>
        <begin position="1" status="less than"/>
        <end position="441"/>
    </location>
</feature>
<feature type="active site" description="Proton acceptor" evidence="1">
    <location>
        <position position="141"/>
    </location>
</feature>
<feature type="active site" description="Proton acceptor" evidence="1">
    <location>
        <position position="260"/>
    </location>
</feature>
<feature type="binding site" description="in homodimeric partner" evidence="1">
    <location>
        <position position="89"/>
    </location>
    <ligand>
        <name>substrate</name>
    </ligand>
</feature>
<feature type="binding site" evidence="1">
    <location>
        <position position="139"/>
    </location>
    <ligand>
        <name>substrate</name>
    </ligand>
</feature>
<feature type="binding site" evidence="1">
    <location>
        <position position="143"/>
    </location>
    <ligand>
        <name>substrate</name>
    </ligand>
</feature>
<feature type="binding site" description="via carbamate group" evidence="1">
    <location>
        <position position="167"/>
    </location>
    <ligand>
        <name>Mg(2+)</name>
        <dbReference type="ChEBI" id="CHEBI:18420"/>
    </ligand>
</feature>
<feature type="binding site" evidence="1">
    <location>
        <position position="169"/>
    </location>
    <ligand>
        <name>Mg(2+)</name>
        <dbReference type="ChEBI" id="CHEBI:18420"/>
    </ligand>
</feature>
<feature type="binding site" evidence="1">
    <location>
        <position position="170"/>
    </location>
    <ligand>
        <name>Mg(2+)</name>
        <dbReference type="ChEBI" id="CHEBI:18420"/>
    </ligand>
</feature>
<feature type="binding site" evidence="1">
    <location>
        <position position="261"/>
    </location>
    <ligand>
        <name>substrate</name>
    </ligand>
</feature>
<feature type="binding site" evidence="1">
    <location>
        <position position="345"/>
    </location>
    <ligand>
        <name>substrate</name>
    </ligand>
</feature>
<feature type="site" description="Transition state stabilizer" evidence="1">
    <location>
        <position position="300"/>
    </location>
</feature>
<feature type="modified residue" description="N6-carboxylysine" evidence="1">
    <location>
        <position position="167"/>
    </location>
</feature>
<feature type="disulfide bond" description="Interchain; in linked form" evidence="1">
    <location>
        <position position="213"/>
    </location>
</feature>
<feature type="unsure residue">
    <location>
        <position position="260"/>
    </location>
</feature>
<feature type="non-terminal residue">
    <location>
        <position position="1"/>
    </location>
</feature>
<evidence type="ECO:0000255" key="1">
    <source>
        <dbReference type="HAMAP-Rule" id="MF_01338"/>
    </source>
</evidence>
<evidence type="ECO:0000305" key="2"/>
<organism>
    <name type="scientific">Asclepias exaltata</name>
    <name type="common">Poke milkweed</name>
    <dbReference type="NCBI Taxonomy" id="28506"/>
    <lineage>
        <taxon>Eukaryota</taxon>
        <taxon>Viridiplantae</taxon>
        <taxon>Streptophyta</taxon>
        <taxon>Embryophyta</taxon>
        <taxon>Tracheophyta</taxon>
        <taxon>Spermatophyta</taxon>
        <taxon>Magnoliopsida</taxon>
        <taxon>eudicotyledons</taxon>
        <taxon>Gunneridae</taxon>
        <taxon>Pentapetalae</taxon>
        <taxon>asterids</taxon>
        <taxon>lamiids</taxon>
        <taxon>Gentianales</taxon>
        <taxon>Apocynaceae</taxon>
        <taxon>Asclepiadoideae</taxon>
        <taxon>Asclepiadeae</taxon>
        <taxon>Asclepiadinae</taxon>
        <taxon>Asclepias</taxon>
    </lineage>
</organism>
<keyword id="KW-0113">Calvin cycle</keyword>
<keyword id="KW-0120">Carbon dioxide fixation</keyword>
<keyword id="KW-0150">Chloroplast</keyword>
<keyword id="KW-1015">Disulfide bond</keyword>
<keyword id="KW-0456">Lyase</keyword>
<keyword id="KW-0460">Magnesium</keyword>
<keyword id="KW-0479">Metal-binding</keyword>
<keyword id="KW-0503">Monooxygenase</keyword>
<keyword id="KW-0560">Oxidoreductase</keyword>
<keyword id="KW-0601">Photorespiration</keyword>
<keyword id="KW-0602">Photosynthesis</keyword>
<keyword id="KW-0934">Plastid</keyword>
<proteinExistence type="inferred from homology"/>
<comment type="function">
    <text evidence="1">RuBisCO catalyzes two reactions: the carboxylation of D-ribulose 1,5-bisphosphate, the primary event in carbon dioxide fixation, as well as the oxidative fragmentation of the pentose substrate in the photorespiration process. Both reactions occur simultaneously and in competition at the same active site.</text>
</comment>
<comment type="catalytic activity">
    <reaction evidence="1">
        <text>2 (2R)-3-phosphoglycerate + 2 H(+) = D-ribulose 1,5-bisphosphate + CO2 + H2O</text>
        <dbReference type="Rhea" id="RHEA:23124"/>
        <dbReference type="ChEBI" id="CHEBI:15377"/>
        <dbReference type="ChEBI" id="CHEBI:15378"/>
        <dbReference type="ChEBI" id="CHEBI:16526"/>
        <dbReference type="ChEBI" id="CHEBI:57870"/>
        <dbReference type="ChEBI" id="CHEBI:58272"/>
        <dbReference type="EC" id="4.1.1.39"/>
    </reaction>
</comment>
<comment type="catalytic activity">
    <reaction evidence="1">
        <text>D-ribulose 1,5-bisphosphate + O2 = 2-phosphoglycolate + (2R)-3-phosphoglycerate + 2 H(+)</text>
        <dbReference type="Rhea" id="RHEA:36631"/>
        <dbReference type="ChEBI" id="CHEBI:15378"/>
        <dbReference type="ChEBI" id="CHEBI:15379"/>
        <dbReference type="ChEBI" id="CHEBI:57870"/>
        <dbReference type="ChEBI" id="CHEBI:58033"/>
        <dbReference type="ChEBI" id="CHEBI:58272"/>
    </reaction>
</comment>
<comment type="cofactor">
    <cofactor evidence="1">
        <name>Mg(2+)</name>
        <dbReference type="ChEBI" id="CHEBI:18420"/>
    </cofactor>
    <text evidence="1">Binds 1 Mg(2+) ion per subunit.</text>
</comment>
<comment type="subunit">
    <text evidence="1">Heterohexadecamer of 8 large chains and 8 small chains; disulfide-linked. The disulfide link is formed within the large subunit homodimers.</text>
</comment>
<comment type="subcellular location">
    <subcellularLocation>
        <location>Plastid</location>
        <location>Chloroplast</location>
    </subcellularLocation>
</comment>
<comment type="PTM">
    <text evidence="1">The disulfide bond which can form in the large chain dimeric partners within the hexadecamer appears to be associated with oxidative stress and protein turnover.</text>
</comment>
<comment type="miscellaneous">
    <text evidence="1">The basic functional RuBisCO is composed of a large chain homodimer in a 'head-to-tail' conformation. In form I RuBisCO this homodimer is arranged in a barrel-like tetramer with the small subunits forming a tetrameric 'cap' on each end of the 'barrel'.</text>
</comment>
<comment type="similarity">
    <text evidence="1">Belongs to the RuBisCO large chain family. Type I subfamily.</text>
</comment>
<comment type="caution">
    <text evidence="2">Nucleotide sequencing could not specify the residue at 260, the location of a conserved His which is expected to act as the active site proton acceptor.</text>
</comment>
<sequence>DILAAFRVTPQPGVPPEEAGAAVAAESSTGTWTTVWTDGLTSLDRYKGRCYHIEXVPGEEDQFIAYVAYPLDLFEEGSVTNMLTSIVGNVFGFKALRALRLEDLRIPPAYVKTFQGPPHGIQVERDKLNKYGRPLLRCTIKPKLGLSAKNYGRAVYECLRGGLDFTKDDENVNSQPFMRWRDRFLFCAEAIFKSQAETGEIKGHYLNATAGTCEEMYKRAIFARELGVPIVMHDYLTGGFTANTSLAHYCRDNGLLLHIHXXMHAVIDRQKNHGMHFRVLAKALRMSGGDHIYAGTVVGKLEGERDITLGFVDLLRDDFVEKDRSRGIYFTQDWVSLPGVLAVASGGIHVXHMPALTEIFGDDSVLQFGGGTLGHPWGNAPGAVANRVALEACVQARNEGRDLAVEGNEIIREASKWSPELAAACEVWKEIRFNFKAVDTL</sequence>